<protein>
    <recommendedName>
        <fullName>Uncharacterized protein YxeD</fullName>
    </recommendedName>
</protein>
<sequence length="117" mass="13631">MHNTQHGLQQLNQCRQTAQQLIQQTQQSSQQYRQMLHQEQQNIQMLQQILNHEQQAAHTIQQALHGHDMAIQKCQQVVNMCNQMQQELTGQSSVMNTNVSTLPFGQNTTFQQQSYQQ</sequence>
<feature type="chain" id="PRO_0000050013" description="Uncharacterized protein YxeD">
    <location>
        <begin position="1"/>
        <end position="117"/>
    </location>
</feature>
<feature type="sequence conflict" description="In Ref. 1; BAA08320." evidence="1" ref="1">
    <original>Q</original>
    <variation>E</variation>
    <location>
        <position position="48"/>
    </location>
</feature>
<evidence type="ECO:0000305" key="1"/>
<accession>P54943</accession>
<gene>
    <name type="primary">yxeD</name>
    <name type="ordered locus">BSU39590</name>
    <name type="ORF">HS74DR</name>
</gene>
<keyword id="KW-1185">Reference proteome</keyword>
<reference key="1">
    <citation type="journal article" date="1995" name="DNA Res.">
        <title>Cloning and sequencing of a 23-kb region of the Bacillus subtilis genome between the iol and hut operons.</title>
        <authorList>
            <person name="Yoshida K."/>
            <person name="Fujimyra M."/>
            <person name="Yanai N."/>
            <person name="Fujita Y."/>
        </authorList>
    </citation>
    <scope>NUCLEOTIDE SEQUENCE [GENOMIC DNA]</scope>
    <source>
        <strain>168 / BGSC1A1</strain>
    </source>
</reference>
<reference key="2">
    <citation type="journal article" date="1997" name="Nature">
        <title>The complete genome sequence of the Gram-positive bacterium Bacillus subtilis.</title>
        <authorList>
            <person name="Kunst F."/>
            <person name="Ogasawara N."/>
            <person name="Moszer I."/>
            <person name="Albertini A.M."/>
            <person name="Alloni G."/>
            <person name="Azevedo V."/>
            <person name="Bertero M.G."/>
            <person name="Bessieres P."/>
            <person name="Bolotin A."/>
            <person name="Borchert S."/>
            <person name="Borriss R."/>
            <person name="Boursier L."/>
            <person name="Brans A."/>
            <person name="Braun M."/>
            <person name="Brignell S.C."/>
            <person name="Bron S."/>
            <person name="Brouillet S."/>
            <person name="Bruschi C.V."/>
            <person name="Caldwell B."/>
            <person name="Capuano V."/>
            <person name="Carter N.M."/>
            <person name="Choi S.-K."/>
            <person name="Codani J.-J."/>
            <person name="Connerton I.F."/>
            <person name="Cummings N.J."/>
            <person name="Daniel R.A."/>
            <person name="Denizot F."/>
            <person name="Devine K.M."/>
            <person name="Duesterhoeft A."/>
            <person name="Ehrlich S.D."/>
            <person name="Emmerson P.T."/>
            <person name="Entian K.-D."/>
            <person name="Errington J."/>
            <person name="Fabret C."/>
            <person name="Ferrari E."/>
            <person name="Foulger D."/>
            <person name="Fritz C."/>
            <person name="Fujita M."/>
            <person name="Fujita Y."/>
            <person name="Fuma S."/>
            <person name="Galizzi A."/>
            <person name="Galleron N."/>
            <person name="Ghim S.-Y."/>
            <person name="Glaser P."/>
            <person name="Goffeau A."/>
            <person name="Golightly E.J."/>
            <person name="Grandi G."/>
            <person name="Guiseppi G."/>
            <person name="Guy B.J."/>
            <person name="Haga K."/>
            <person name="Haiech J."/>
            <person name="Harwood C.R."/>
            <person name="Henaut A."/>
            <person name="Hilbert H."/>
            <person name="Holsappel S."/>
            <person name="Hosono S."/>
            <person name="Hullo M.-F."/>
            <person name="Itaya M."/>
            <person name="Jones L.-M."/>
            <person name="Joris B."/>
            <person name="Karamata D."/>
            <person name="Kasahara Y."/>
            <person name="Klaerr-Blanchard M."/>
            <person name="Klein C."/>
            <person name="Kobayashi Y."/>
            <person name="Koetter P."/>
            <person name="Koningstein G."/>
            <person name="Krogh S."/>
            <person name="Kumano M."/>
            <person name="Kurita K."/>
            <person name="Lapidus A."/>
            <person name="Lardinois S."/>
            <person name="Lauber J."/>
            <person name="Lazarevic V."/>
            <person name="Lee S.-M."/>
            <person name="Levine A."/>
            <person name="Liu H."/>
            <person name="Masuda S."/>
            <person name="Mauel C."/>
            <person name="Medigue C."/>
            <person name="Medina N."/>
            <person name="Mellado R.P."/>
            <person name="Mizuno M."/>
            <person name="Moestl D."/>
            <person name="Nakai S."/>
            <person name="Noback M."/>
            <person name="Noone D."/>
            <person name="O'Reilly M."/>
            <person name="Ogawa K."/>
            <person name="Ogiwara A."/>
            <person name="Oudega B."/>
            <person name="Park S.-H."/>
            <person name="Parro V."/>
            <person name="Pohl T.M."/>
            <person name="Portetelle D."/>
            <person name="Porwollik S."/>
            <person name="Prescott A.M."/>
            <person name="Presecan E."/>
            <person name="Pujic P."/>
            <person name="Purnelle B."/>
            <person name="Rapoport G."/>
            <person name="Rey M."/>
            <person name="Reynolds S."/>
            <person name="Rieger M."/>
            <person name="Rivolta C."/>
            <person name="Rocha E."/>
            <person name="Roche B."/>
            <person name="Rose M."/>
            <person name="Sadaie Y."/>
            <person name="Sato T."/>
            <person name="Scanlan E."/>
            <person name="Schleich S."/>
            <person name="Schroeter R."/>
            <person name="Scoffone F."/>
            <person name="Sekiguchi J."/>
            <person name="Sekowska A."/>
            <person name="Seror S.J."/>
            <person name="Serror P."/>
            <person name="Shin B.-S."/>
            <person name="Soldo B."/>
            <person name="Sorokin A."/>
            <person name="Tacconi E."/>
            <person name="Takagi T."/>
            <person name="Takahashi H."/>
            <person name="Takemaru K."/>
            <person name="Takeuchi M."/>
            <person name="Tamakoshi A."/>
            <person name="Tanaka T."/>
            <person name="Terpstra P."/>
            <person name="Tognoni A."/>
            <person name="Tosato V."/>
            <person name="Uchiyama S."/>
            <person name="Vandenbol M."/>
            <person name="Vannier F."/>
            <person name="Vassarotti A."/>
            <person name="Viari A."/>
            <person name="Wambutt R."/>
            <person name="Wedler E."/>
            <person name="Wedler H."/>
            <person name="Weitzenegger T."/>
            <person name="Winters P."/>
            <person name="Wipat A."/>
            <person name="Yamamoto H."/>
            <person name="Yamane K."/>
            <person name="Yasumoto K."/>
            <person name="Yata K."/>
            <person name="Yoshida K."/>
            <person name="Yoshikawa H.-F."/>
            <person name="Zumstein E."/>
            <person name="Yoshikawa H."/>
            <person name="Danchin A."/>
        </authorList>
    </citation>
    <scope>NUCLEOTIDE SEQUENCE [LARGE SCALE GENOMIC DNA]</scope>
    <source>
        <strain>168</strain>
    </source>
</reference>
<reference key="3">
    <citation type="journal article" date="2009" name="Microbiology">
        <title>From a consortium sequence to a unified sequence: the Bacillus subtilis 168 reference genome a decade later.</title>
        <authorList>
            <person name="Barbe V."/>
            <person name="Cruveiller S."/>
            <person name="Kunst F."/>
            <person name="Lenoble P."/>
            <person name="Meurice G."/>
            <person name="Sekowska A."/>
            <person name="Vallenet D."/>
            <person name="Wang T."/>
            <person name="Moszer I."/>
            <person name="Medigue C."/>
            <person name="Danchin A."/>
        </authorList>
    </citation>
    <scope>SEQUENCE REVISION TO 48</scope>
</reference>
<proteinExistence type="predicted"/>
<name>YXED_BACSU</name>
<organism>
    <name type="scientific">Bacillus subtilis (strain 168)</name>
    <dbReference type="NCBI Taxonomy" id="224308"/>
    <lineage>
        <taxon>Bacteria</taxon>
        <taxon>Bacillati</taxon>
        <taxon>Bacillota</taxon>
        <taxon>Bacilli</taxon>
        <taxon>Bacillales</taxon>
        <taxon>Bacillaceae</taxon>
        <taxon>Bacillus</taxon>
    </lineage>
</organism>
<dbReference type="EMBL" id="D45912">
    <property type="protein sequence ID" value="BAA08320.1"/>
    <property type="molecule type" value="Genomic_DNA"/>
</dbReference>
<dbReference type="EMBL" id="AL009126">
    <property type="protein sequence ID" value="CAB15995.2"/>
    <property type="molecule type" value="Genomic_DNA"/>
</dbReference>
<dbReference type="PIR" id="F70074">
    <property type="entry name" value="F70074"/>
</dbReference>
<dbReference type="RefSeq" id="NP_391838.2">
    <property type="nucleotide sequence ID" value="NC_000964.3"/>
</dbReference>
<dbReference type="RefSeq" id="WP_003242469.1">
    <property type="nucleotide sequence ID" value="NZ_OZ025638.1"/>
</dbReference>
<dbReference type="SMR" id="P54943"/>
<dbReference type="FunCoup" id="P54943">
    <property type="interactions" value="39"/>
</dbReference>
<dbReference type="STRING" id="224308.BSU39590"/>
<dbReference type="PaxDb" id="224308-BSU39590"/>
<dbReference type="EnsemblBacteria" id="CAB15995">
    <property type="protein sequence ID" value="CAB15995"/>
    <property type="gene ID" value="BSU_39590"/>
</dbReference>
<dbReference type="GeneID" id="937597"/>
<dbReference type="KEGG" id="bsu:BSU39590"/>
<dbReference type="PATRIC" id="fig|224308.179.peg.4284"/>
<dbReference type="eggNOG" id="ENOG50336Y2">
    <property type="taxonomic scope" value="Bacteria"/>
</dbReference>
<dbReference type="InParanoid" id="P54943"/>
<dbReference type="BioCyc" id="BSUB:BSU39590-MONOMER"/>
<dbReference type="Proteomes" id="UP000001570">
    <property type="component" value="Chromosome"/>
</dbReference>